<name>LSPA_ACIBS</name>
<sequence length="176" mass="19929">MPNSQAKKGLFQFYPHNLIWLGLSVLAIVLDQWTKWIASTHMNYADPVPVLPFLNWTLLHNYGAAFSFLSDAGGWQRYFFTSLAGLVSILFVFWLLRMPKKMVVLPVAIALILGGALGNLIDRITLGYVVDFIHVYYQNHHFPAFNIADSAITLGTILLLIDTFFLEKQRPKNSDA</sequence>
<organism>
    <name type="scientific">Acinetobacter baumannii (strain SDF)</name>
    <dbReference type="NCBI Taxonomy" id="509170"/>
    <lineage>
        <taxon>Bacteria</taxon>
        <taxon>Pseudomonadati</taxon>
        <taxon>Pseudomonadota</taxon>
        <taxon>Gammaproteobacteria</taxon>
        <taxon>Moraxellales</taxon>
        <taxon>Moraxellaceae</taxon>
        <taxon>Acinetobacter</taxon>
        <taxon>Acinetobacter calcoaceticus/baumannii complex</taxon>
    </lineage>
</organism>
<proteinExistence type="inferred from homology"/>
<accession>B0VMM0</accession>
<feature type="chain" id="PRO_1000097225" description="Lipoprotein signal peptidase">
    <location>
        <begin position="1"/>
        <end position="176"/>
    </location>
</feature>
<feature type="transmembrane region" description="Helical" evidence="1">
    <location>
        <begin position="10"/>
        <end position="30"/>
    </location>
</feature>
<feature type="transmembrane region" description="Helical" evidence="1">
    <location>
        <begin position="48"/>
        <end position="68"/>
    </location>
</feature>
<feature type="transmembrane region" description="Helical" evidence="1">
    <location>
        <begin position="78"/>
        <end position="98"/>
    </location>
</feature>
<feature type="transmembrane region" description="Helical" evidence="1">
    <location>
        <begin position="102"/>
        <end position="122"/>
    </location>
</feature>
<feature type="transmembrane region" description="Helical" evidence="1">
    <location>
        <begin position="141"/>
        <end position="161"/>
    </location>
</feature>
<feature type="active site" evidence="1">
    <location>
        <position position="131"/>
    </location>
</feature>
<feature type="active site" evidence="1">
    <location>
        <position position="149"/>
    </location>
</feature>
<evidence type="ECO:0000255" key="1">
    <source>
        <dbReference type="HAMAP-Rule" id="MF_00161"/>
    </source>
</evidence>
<gene>
    <name evidence="1" type="primary">lspA</name>
    <name type="ordered locus">ABSDF0026</name>
</gene>
<protein>
    <recommendedName>
        <fullName evidence="1">Lipoprotein signal peptidase</fullName>
        <ecNumber evidence="1">3.4.23.36</ecNumber>
    </recommendedName>
    <alternativeName>
        <fullName evidence="1">Prolipoprotein signal peptidase</fullName>
    </alternativeName>
    <alternativeName>
        <fullName evidence="1">Signal peptidase II</fullName>
        <shortName evidence="1">SPase II</shortName>
    </alternativeName>
</protein>
<keyword id="KW-0064">Aspartyl protease</keyword>
<keyword id="KW-0997">Cell inner membrane</keyword>
<keyword id="KW-1003">Cell membrane</keyword>
<keyword id="KW-0378">Hydrolase</keyword>
<keyword id="KW-0472">Membrane</keyword>
<keyword id="KW-0645">Protease</keyword>
<keyword id="KW-0812">Transmembrane</keyword>
<keyword id="KW-1133">Transmembrane helix</keyword>
<reference key="1">
    <citation type="journal article" date="2008" name="PLoS ONE">
        <title>Comparative analysis of Acinetobacters: three genomes for three lifestyles.</title>
        <authorList>
            <person name="Vallenet D."/>
            <person name="Nordmann P."/>
            <person name="Barbe V."/>
            <person name="Poirel L."/>
            <person name="Mangenot S."/>
            <person name="Bataille E."/>
            <person name="Dossat C."/>
            <person name="Gas S."/>
            <person name="Kreimeyer A."/>
            <person name="Lenoble P."/>
            <person name="Oztas S."/>
            <person name="Poulain J."/>
            <person name="Segurens B."/>
            <person name="Robert C."/>
            <person name="Abergel C."/>
            <person name="Claverie J.-M."/>
            <person name="Raoult D."/>
            <person name="Medigue C."/>
            <person name="Weissenbach J."/>
            <person name="Cruveiller S."/>
        </authorList>
    </citation>
    <scope>NUCLEOTIDE SEQUENCE [LARGE SCALE GENOMIC DNA]</scope>
    <source>
        <strain>SDF</strain>
    </source>
</reference>
<dbReference type="EC" id="3.4.23.36" evidence="1"/>
<dbReference type="EMBL" id="CU468230">
    <property type="protein sequence ID" value="CAO99442.1"/>
    <property type="molecule type" value="Genomic_DNA"/>
</dbReference>
<dbReference type="SMR" id="B0VMM0"/>
<dbReference type="KEGG" id="abm:ABSDF0026"/>
<dbReference type="HOGENOM" id="CLU_083252_4_0_6"/>
<dbReference type="UniPathway" id="UPA00665"/>
<dbReference type="Proteomes" id="UP000001741">
    <property type="component" value="Chromosome"/>
</dbReference>
<dbReference type="GO" id="GO:0005886">
    <property type="term" value="C:plasma membrane"/>
    <property type="evidence" value="ECO:0007669"/>
    <property type="project" value="UniProtKB-SubCell"/>
</dbReference>
<dbReference type="GO" id="GO:0004190">
    <property type="term" value="F:aspartic-type endopeptidase activity"/>
    <property type="evidence" value="ECO:0007669"/>
    <property type="project" value="UniProtKB-UniRule"/>
</dbReference>
<dbReference type="GO" id="GO:0006508">
    <property type="term" value="P:proteolysis"/>
    <property type="evidence" value="ECO:0007669"/>
    <property type="project" value="UniProtKB-KW"/>
</dbReference>
<dbReference type="HAMAP" id="MF_00161">
    <property type="entry name" value="LspA"/>
    <property type="match status" value="1"/>
</dbReference>
<dbReference type="InterPro" id="IPR001872">
    <property type="entry name" value="Peptidase_A8"/>
</dbReference>
<dbReference type="NCBIfam" id="TIGR00077">
    <property type="entry name" value="lspA"/>
    <property type="match status" value="1"/>
</dbReference>
<dbReference type="PANTHER" id="PTHR33695">
    <property type="entry name" value="LIPOPROTEIN SIGNAL PEPTIDASE"/>
    <property type="match status" value="1"/>
</dbReference>
<dbReference type="PANTHER" id="PTHR33695:SF1">
    <property type="entry name" value="LIPOPROTEIN SIGNAL PEPTIDASE"/>
    <property type="match status" value="1"/>
</dbReference>
<dbReference type="Pfam" id="PF01252">
    <property type="entry name" value="Peptidase_A8"/>
    <property type="match status" value="1"/>
</dbReference>
<dbReference type="PRINTS" id="PR00781">
    <property type="entry name" value="LIPOSIGPTASE"/>
</dbReference>
<dbReference type="PROSITE" id="PS00855">
    <property type="entry name" value="SPASE_II"/>
    <property type="match status" value="1"/>
</dbReference>
<comment type="function">
    <text evidence="1">This protein specifically catalyzes the removal of signal peptides from prolipoproteins.</text>
</comment>
<comment type="catalytic activity">
    <reaction evidence="1">
        <text>Release of signal peptides from bacterial membrane prolipoproteins. Hydrolyzes -Xaa-Yaa-Zaa-|-(S,diacylglyceryl)Cys-, in which Xaa is hydrophobic (preferably Leu), and Yaa (Ala or Ser) and Zaa (Gly or Ala) have small, neutral side chains.</text>
        <dbReference type="EC" id="3.4.23.36"/>
    </reaction>
</comment>
<comment type="pathway">
    <text evidence="1">Protein modification; lipoprotein biosynthesis (signal peptide cleavage).</text>
</comment>
<comment type="subcellular location">
    <subcellularLocation>
        <location evidence="1">Cell inner membrane</location>
        <topology evidence="1">Multi-pass membrane protein</topology>
    </subcellularLocation>
</comment>
<comment type="similarity">
    <text evidence="1">Belongs to the peptidase A8 family.</text>
</comment>